<reference key="1">
    <citation type="journal article" date="2008" name="Proc. Natl. Acad. Sci. U.S.A.">
        <title>Nitrogen fixation island and rhizosphere competence traits in the genome of root-associated Pseudomonas stutzeri A1501.</title>
        <authorList>
            <person name="Yan Y."/>
            <person name="Yang J."/>
            <person name="Dou Y."/>
            <person name="Chen M."/>
            <person name="Ping S."/>
            <person name="Peng J."/>
            <person name="Lu W."/>
            <person name="Zhang W."/>
            <person name="Yao Z."/>
            <person name="Li H."/>
            <person name="Liu W."/>
            <person name="He S."/>
            <person name="Geng L."/>
            <person name="Zhang X."/>
            <person name="Yang F."/>
            <person name="Yu H."/>
            <person name="Zhan Y."/>
            <person name="Li D."/>
            <person name="Lin Z."/>
            <person name="Wang Y."/>
            <person name="Elmerich C."/>
            <person name="Lin M."/>
            <person name="Jin Q."/>
        </authorList>
    </citation>
    <scope>NUCLEOTIDE SEQUENCE [LARGE SCALE GENOMIC DNA]</scope>
    <source>
        <strain>A1501</strain>
    </source>
</reference>
<protein>
    <recommendedName>
        <fullName evidence="1">tRNA 5-methylaminomethyl-2-thiouridine biosynthesis bifunctional protein MnmC</fullName>
        <shortName evidence="1">tRNA mnm(5)s(2)U biosynthesis bifunctional protein</shortName>
    </recommendedName>
    <domain>
        <recommendedName>
            <fullName evidence="1">tRNA (mnm(5)s(2)U34)-methyltransferase</fullName>
            <ecNumber evidence="1">2.1.1.61</ecNumber>
        </recommendedName>
    </domain>
    <domain>
        <recommendedName>
            <fullName evidence="1">FAD-dependent cmnm(5)s(2)U34 oxidoreductase</fullName>
            <ecNumber evidence="1">1.5.-.-</ecNumber>
        </recommendedName>
    </domain>
</protein>
<keyword id="KW-0963">Cytoplasm</keyword>
<keyword id="KW-0274">FAD</keyword>
<keyword id="KW-0285">Flavoprotein</keyword>
<keyword id="KW-0489">Methyltransferase</keyword>
<keyword id="KW-0511">Multifunctional enzyme</keyword>
<keyword id="KW-0560">Oxidoreductase</keyword>
<keyword id="KW-1185">Reference proteome</keyword>
<keyword id="KW-0949">S-adenosyl-L-methionine</keyword>
<keyword id="KW-0808">Transferase</keyword>
<keyword id="KW-0819">tRNA processing</keyword>
<name>MNMC_STUS1</name>
<dbReference type="EC" id="2.1.1.61" evidence="1"/>
<dbReference type="EC" id="1.5.-.-" evidence="1"/>
<dbReference type="EMBL" id="CP000304">
    <property type="protein sequence ID" value="ABP80325.1"/>
    <property type="molecule type" value="Genomic_DNA"/>
</dbReference>
<dbReference type="RefSeq" id="WP_011913782.1">
    <property type="nucleotide sequence ID" value="NC_009434.1"/>
</dbReference>
<dbReference type="SMR" id="A4VMX4"/>
<dbReference type="KEGG" id="psa:PST_2675"/>
<dbReference type="eggNOG" id="COG0665">
    <property type="taxonomic scope" value="Bacteria"/>
</dbReference>
<dbReference type="eggNOG" id="COG4121">
    <property type="taxonomic scope" value="Bacteria"/>
</dbReference>
<dbReference type="HOGENOM" id="CLU_022427_1_0_6"/>
<dbReference type="Proteomes" id="UP000000233">
    <property type="component" value="Chromosome"/>
</dbReference>
<dbReference type="GO" id="GO:0005737">
    <property type="term" value="C:cytoplasm"/>
    <property type="evidence" value="ECO:0007669"/>
    <property type="project" value="UniProtKB-SubCell"/>
</dbReference>
<dbReference type="GO" id="GO:0050660">
    <property type="term" value="F:flavin adenine dinucleotide binding"/>
    <property type="evidence" value="ECO:0007669"/>
    <property type="project" value="UniProtKB-UniRule"/>
</dbReference>
<dbReference type="GO" id="GO:0016645">
    <property type="term" value="F:oxidoreductase activity, acting on the CH-NH group of donors"/>
    <property type="evidence" value="ECO:0007669"/>
    <property type="project" value="InterPro"/>
</dbReference>
<dbReference type="GO" id="GO:0004808">
    <property type="term" value="F:tRNA (5-methylaminomethyl-2-thiouridylate)(34)-methyltransferase activity"/>
    <property type="evidence" value="ECO:0007669"/>
    <property type="project" value="UniProtKB-EC"/>
</dbReference>
<dbReference type="GO" id="GO:0032259">
    <property type="term" value="P:methylation"/>
    <property type="evidence" value="ECO:0007669"/>
    <property type="project" value="UniProtKB-KW"/>
</dbReference>
<dbReference type="GO" id="GO:0002098">
    <property type="term" value="P:tRNA wobble uridine modification"/>
    <property type="evidence" value="ECO:0007669"/>
    <property type="project" value="TreeGrafter"/>
</dbReference>
<dbReference type="Gene3D" id="3.30.9.10">
    <property type="entry name" value="D-Amino Acid Oxidase, subunit A, domain 2"/>
    <property type="match status" value="1"/>
</dbReference>
<dbReference type="Gene3D" id="3.50.50.60">
    <property type="entry name" value="FAD/NAD(P)-binding domain"/>
    <property type="match status" value="1"/>
</dbReference>
<dbReference type="Gene3D" id="3.40.50.150">
    <property type="entry name" value="Vaccinia Virus protein VP39"/>
    <property type="match status" value="1"/>
</dbReference>
<dbReference type="HAMAP" id="MF_01102">
    <property type="entry name" value="MnmC"/>
    <property type="match status" value="1"/>
</dbReference>
<dbReference type="InterPro" id="IPR006076">
    <property type="entry name" value="FAD-dep_OxRdtase"/>
</dbReference>
<dbReference type="InterPro" id="IPR036188">
    <property type="entry name" value="FAD/NAD-bd_sf"/>
</dbReference>
<dbReference type="InterPro" id="IPR008471">
    <property type="entry name" value="MnmC-like_methylTransf"/>
</dbReference>
<dbReference type="InterPro" id="IPR029063">
    <property type="entry name" value="SAM-dependent_MTases_sf"/>
</dbReference>
<dbReference type="InterPro" id="IPR023032">
    <property type="entry name" value="tRNA_MAMT_biosynth_bifunc_MnmC"/>
</dbReference>
<dbReference type="InterPro" id="IPR047785">
    <property type="entry name" value="tRNA_MNMC2"/>
</dbReference>
<dbReference type="InterPro" id="IPR017610">
    <property type="entry name" value="tRNA_S-uridine_synth_MnmC_C"/>
</dbReference>
<dbReference type="NCBIfam" id="TIGR03197">
    <property type="entry name" value="MnmC_Cterm"/>
    <property type="match status" value="1"/>
</dbReference>
<dbReference type="NCBIfam" id="NF002481">
    <property type="entry name" value="PRK01747.1-2"/>
    <property type="match status" value="1"/>
</dbReference>
<dbReference type="NCBIfam" id="NF033855">
    <property type="entry name" value="tRNA_MNMC2"/>
    <property type="match status" value="1"/>
</dbReference>
<dbReference type="PANTHER" id="PTHR13847">
    <property type="entry name" value="SARCOSINE DEHYDROGENASE-RELATED"/>
    <property type="match status" value="1"/>
</dbReference>
<dbReference type="PANTHER" id="PTHR13847:SF283">
    <property type="entry name" value="TRNA 5-METHYLAMINOMETHYL-2-THIOURIDINE BIOSYNTHESIS BIFUNCTIONAL PROTEIN MNMC"/>
    <property type="match status" value="1"/>
</dbReference>
<dbReference type="Pfam" id="PF01266">
    <property type="entry name" value="DAO"/>
    <property type="match status" value="1"/>
</dbReference>
<dbReference type="Pfam" id="PF05430">
    <property type="entry name" value="Methyltransf_30"/>
    <property type="match status" value="1"/>
</dbReference>
<dbReference type="SUPFAM" id="SSF51905">
    <property type="entry name" value="FAD/NAD(P)-binding domain"/>
    <property type="match status" value="1"/>
</dbReference>
<dbReference type="SUPFAM" id="SSF53335">
    <property type="entry name" value="S-adenosyl-L-methionine-dependent methyltransferases"/>
    <property type="match status" value="1"/>
</dbReference>
<comment type="function">
    <text evidence="1">Catalyzes the last two steps in the biosynthesis of 5-methylaminomethyl-2-thiouridine (mnm(5)s(2)U) at the wobble position (U34) in tRNA. Catalyzes the FAD-dependent demodification of cmnm(5)s(2)U34 to nm(5)s(2)U34, followed by the transfer of a methyl group from S-adenosyl-L-methionine to nm(5)s(2)U34, to form mnm(5)s(2)U34.</text>
</comment>
<comment type="catalytic activity">
    <reaction evidence="1">
        <text>5-aminomethyl-2-thiouridine(34) in tRNA + S-adenosyl-L-methionine = 5-methylaminomethyl-2-thiouridine(34) in tRNA + S-adenosyl-L-homocysteine + H(+)</text>
        <dbReference type="Rhea" id="RHEA:19569"/>
        <dbReference type="Rhea" id="RHEA-COMP:10195"/>
        <dbReference type="Rhea" id="RHEA-COMP:10197"/>
        <dbReference type="ChEBI" id="CHEBI:15378"/>
        <dbReference type="ChEBI" id="CHEBI:57856"/>
        <dbReference type="ChEBI" id="CHEBI:59789"/>
        <dbReference type="ChEBI" id="CHEBI:74454"/>
        <dbReference type="ChEBI" id="CHEBI:74455"/>
        <dbReference type="EC" id="2.1.1.61"/>
    </reaction>
</comment>
<comment type="cofactor">
    <cofactor evidence="1">
        <name>FAD</name>
        <dbReference type="ChEBI" id="CHEBI:57692"/>
    </cofactor>
</comment>
<comment type="subcellular location">
    <subcellularLocation>
        <location evidence="1">Cytoplasm</location>
    </subcellularLocation>
</comment>
<comment type="similarity">
    <text evidence="1">In the N-terminal section; belongs to the methyltransferase superfamily. tRNA (mnm(5)s(2)U34)-methyltransferase family.</text>
</comment>
<comment type="similarity">
    <text evidence="1">In the C-terminal section; belongs to the DAO family.</text>
</comment>
<organism>
    <name type="scientific">Stutzerimonas stutzeri (strain A1501)</name>
    <name type="common">Pseudomonas stutzeri</name>
    <dbReference type="NCBI Taxonomy" id="379731"/>
    <lineage>
        <taxon>Bacteria</taxon>
        <taxon>Pseudomonadati</taxon>
        <taxon>Pseudomonadota</taxon>
        <taxon>Gammaproteobacteria</taxon>
        <taxon>Pseudomonadales</taxon>
        <taxon>Pseudomonadaceae</taxon>
        <taxon>Stutzerimonas</taxon>
    </lineage>
</organism>
<proteinExistence type="inferred from homology"/>
<evidence type="ECO:0000255" key="1">
    <source>
        <dbReference type="HAMAP-Rule" id="MF_01102"/>
    </source>
</evidence>
<accession>A4VMX4</accession>
<sequence>MNDHPAQDAFQHAELDWDENGLPQSRHYGDVYFSRASGLAETEHVFLAQNDLPRRFAAMQPDECLVIGETGFGTGLNFLCAWQLFERSASARARLHFVSVEKHPLTFADMQRALALWPELQAQAEQLLEQYVALNPGYQRLVFAGGRVVLTLLIGDVLECLPSLDARIDAWFLDGFAPAKNPQMWQPALFSEMARLSAPGATLGTFTSAGFVRRGLIEAGFDMQRVPGYGHKREILRGHLQSSTAQMADKPWFARPGRTVRERRAVVIGAGLAGCATAAALAARGWRVSVLERHADAAQEGSGNPQGVLYLKLSAHGTALSKLVVGGFSYTRRLLGHLQQGQDWQACGVLQLIYDDKERQRQAELAEAFPPSLVHPLERDAAEALAGVALTEGGLFYPDAGWAHPPALCRWLLQRPGIELLRHREALDLRRHGEAWQVLGGEGVLAEAPVVVLAGAADAARFEQSAWLPLKRIRGQISALPATARSGQLRTVLCAKGYVAPPRDGTHTLGASFNFQQTDDAPSVAEHQANLEMLEQISTDLYQRLQADPQRTEALQGRVAFRCTSPDYLPLIGPLADPQRFAEAYAALARNARQSVQAVCPWLDGLYVNTAHGSRGMISAPLSGELLAAWLDDEPLPLPREVAEACHPNRFLLRKLIRGT</sequence>
<feature type="chain" id="PRO_0000348013" description="tRNA 5-methylaminomethyl-2-thiouridine biosynthesis bifunctional protein MnmC">
    <location>
        <begin position="1"/>
        <end position="660"/>
    </location>
</feature>
<feature type="region of interest" description="tRNA (mnm(5)s(2)U34)-methyltransferase">
    <location>
        <begin position="1"/>
        <end position="241"/>
    </location>
</feature>
<feature type="region of interest" description="FAD-dependent cmnm(5)s(2)U34 oxidoreductase">
    <location>
        <begin position="268"/>
        <end position="660"/>
    </location>
</feature>
<gene>
    <name evidence="1" type="primary">mnmC</name>
    <name type="ordered locus">PST_2675</name>
</gene>